<reference key="1">
    <citation type="journal article" date="2008" name="Appl. Environ. Microbiol.">
        <title>The genome of Polaromonas sp. strain JS666: insights into the evolution of a hydrocarbon- and xenobiotic-degrading bacterium, and features of relevance to biotechnology.</title>
        <authorList>
            <person name="Mattes T.E."/>
            <person name="Alexander A.K."/>
            <person name="Richardson P.M."/>
            <person name="Munk A.C."/>
            <person name="Han C.S."/>
            <person name="Stothard P."/>
            <person name="Coleman N.V."/>
        </authorList>
    </citation>
    <scope>NUCLEOTIDE SEQUENCE [LARGE SCALE GENOMIC DNA]</scope>
    <source>
        <strain>JS666 / ATCC BAA-500</strain>
    </source>
</reference>
<feature type="chain" id="PRO_1000081087" description="Glutamate 5-kinase">
    <location>
        <begin position="1"/>
        <end position="378"/>
    </location>
</feature>
<feature type="domain" description="PUA" evidence="1">
    <location>
        <begin position="285"/>
        <end position="363"/>
    </location>
</feature>
<feature type="binding site" evidence="1">
    <location>
        <position position="19"/>
    </location>
    <ligand>
        <name>ATP</name>
        <dbReference type="ChEBI" id="CHEBI:30616"/>
    </ligand>
</feature>
<feature type="binding site" evidence="1">
    <location>
        <position position="59"/>
    </location>
    <ligand>
        <name>substrate</name>
    </ligand>
</feature>
<feature type="binding site" evidence="1">
    <location>
        <position position="146"/>
    </location>
    <ligand>
        <name>substrate</name>
    </ligand>
</feature>
<feature type="binding site" evidence="1">
    <location>
        <position position="158"/>
    </location>
    <ligand>
        <name>substrate</name>
    </ligand>
</feature>
<feature type="binding site" evidence="1">
    <location>
        <begin position="178"/>
        <end position="179"/>
    </location>
    <ligand>
        <name>ATP</name>
        <dbReference type="ChEBI" id="CHEBI:30616"/>
    </ligand>
</feature>
<organism>
    <name type="scientific">Polaromonas sp. (strain JS666 / ATCC BAA-500)</name>
    <dbReference type="NCBI Taxonomy" id="296591"/>
    <lineage>
        <taxon>Bacteria</taxon>
        <taxon>Pseudomonadati</taxon>
        <taxon>Pseudomonadota</taxon>
        <taxon>Betaproteobacteria</taxon>
        <taxon>Burkholderiales</taxon>
        <taxon>Comamonadaceae</taxon>
        <taxon>Polaromonas</taxon>
    </lineage>
</organism>
<evidence type="ECO:0000255" key="1">
    <source>
        <dbReference type="HAMAP-Rule" id="MF_00456"/>
    </source>
</evidence>
<gene>
    <name evidence="1" type="primary">proB</name>
    <name type="ordered locus">Bpro_0836</name>
</gene>
<comment type="function">
    <text evidence="1">Catalyzes the transfer of a phosphate group to glutamate to form L-glutamate 5-phosphate.</text>
</comment>
<comment type="catalytic activity">
    <reaction evidence="1">
        <text>L-glutamate + ATP = L-glutamyl 5-phosphate + ADP</text>
        <dbReference type="Rhea" id="RHEA:14877"/>
        <dbReference type="ChEBI" id="CHEBI:29985"/>
        <dbReference type="ChEBI" id="CHEBI:30616"/>
        <dbReference type="ChEBI" id="CHEBI:58274"/>
        <dbReference type="ChEBI" id="CHEBI:456216"/>
        <dbReference type="EC" id="2.7.2.11"/>
    </reaction>
</comment>
<comment type="pathway">
    <text evidence="1">Amino-acid biosynthesis; L-proline biosynthesis; L-glutamate 5-semialdehyde from L-glutamate: step 1/2.</text>
</comment>
<comment type="subcellular location">
    <subcellularLocation>
        <location evidence="1">Cytoplasm</location>
    </subcellularLocation>
</comment>
<comment type="similarity">
    <text evidence="1">Belongs to the glutamate 5-kinase family.</text>
</comment>
<protein>
    <recommendedName>
        <fullName evidence="1">Glutamate 5-kinase</fullName>
        <ecNumber evidence="1">2.7.2.11</ecNumber>
    </recommendedName>
    <alternativeName>
        <fullName evidence="1">Gamma-glutamyl kinase</fullName>
        <shortName evidence="1">GK</shortName>
    </alternativeName>
</protein>
<keyword id="KW-0028">Amino-acid biosynthesis</keyword>
<keyword id="KW-0067">ATP-binding</keyword>
<keyword id="KW-0963">Cytoplasm</keyword>
<keyword id="KW-0418">Kinase</keyword>
<keyword id="KW-0547">Nucleotide-binding</keyword>
<keyword id="KW-0641">Proline biosynthesis</keyword>
<keyword id="KW-1185">Reference proteome</keyword>
<keyword id="KW-0808">Transferase</keyword>
<sequence>MQEKTGSPVLRNARRIVVKVGSSLVTNEGRGLDADAIGLWCEQLAALVKDGREVIMVSSGAIAEGMKRLGWTARPKAIHELQAAAAVGQMGLAQVYESKLRENGIGSAQVLLTHADLADRERYLNARSTLLALLQLGVVPVINENDTVVNDEIKFGDNDTLGALVANLVEADALVILTDQKGLYTADPRKDPAARFVHEAKAGDAALEAMAGGAGSSIGKGGMITKILAAKRAAGSGASTVIAWGREPQALIRLTQGEAIGTLLVAQTQKIQARKQWMADHLQMRGSVAVDAGAVSKVRDEGKSLLPIGMTRVDGDFSRGDVIAIRDAEGAEIARGLANYSSSEARLICRKASSEFERLLGYTGEPEMVHRTNLVLTR</sequence>
<name>PROB_POLSJ</name>
<dbReference type="EC" id="2.7.2.11" evidence="1"/>
<dbReference type="EMBL" id="CP000316">
    <property type="protein sequence ID" value="ABE42792.1"/>
    <property type="molecule type" value="Genomic_DNA"/>
</dbReference>
<dbReference type="RefSeq" id="WP_011481794.1">
    <property type="nucleotide sequence ID" value="NC_007948.1"/>
</dbReference>
<dbReference type="SMR" id="Q12FA0"/>
<dbReference type="STRING" id="296591.Bpro_0836"/>
<dbReference type="KEGG" id="pol:Bpro_0836"/>
<dbReference type="eggNOG" id="COG0263">
    <property type="taxonomic scope" value="Bacteria"/>
</dbReference>
<dbReference type="HOGENOM" id="CLU_025400_2_0_4"/>
<dbReference type="OrthoDB" id="9804434at2"/>
<dbReference type="UniPathway" id="UPA00098">
    <property type="reaction ID" value="UER00359"/>
</dbReference>
<dbReference type="Proteomes" id="UP000001983">
    <property type="component" value="Chromosome"/>
</dbReference>
<dbReference type="GO" id="GO:0005829">
    <property type="term" value="C:cytosol"/>
    <property type="evidence" value="ECO:0007669"/>
    <property type="project" value="TreeGrafter"/>
</dbReference>
<dbReference type="GO" id="GO:0005524">
    <property type="term" value="F:ATP binding"/>
    <property type="evidence" value="ECO:0007669"/>
    <property type="project" value="UniProtKB-KW"/>
</dbReference>
<dbReference type="GO" id="GO:0004349">
    <property type="term" value="F:glutamate 5-kinase activity"/>
    <property type="evidence" value="ECO:0007669"/>
    <property type="project" value="UniProtKB-UniRule"/>
</dbReference>
<dbReference type="GO" id="GO:0003723">
    <property type="term" value="F:RNA binding"/>
    <property type="evidence" value="ECO:0007669"/>
    <property type="project" value="InterPro"/>
</dbReference>
<dbReference type="GO" id="GO:0055129">
    <property type="term" value="P:L-proline biosynthetic process"/>
    <property type="evidence" value="ECO:0007669"/>
    <property type="project" value="UniProtKB-UniRule"/>
</dbReference>
<dbReference type="CDD" id="cd04242">
    <property type="entry name" value="AAK_G5K_ProB"/>
    <property type="match status" value="1"/>
</dbReference>
<dbReference type="CDD" id="cd21157">
    <property type="entry name" value="PUA_G5K"/>
    <property type="match status" value="1"/>
</dbReference>
<dbReference type="FunFam" id="2.30.130.10:FF:000007">
    <property type="entry name" value="Glutamate 5-kinase"/>
    <property type="match status" value="1"/>
</dbReference>
<dbReference type="FunFam" id="3.40.1160.10:FF:000018">
    <property type="entry name" value="Glutamate 5-kinase"/>
    <property type="match status" value="1"/>
</dbReference>
<dbReference type="Gene3D" id="3.40.1160.10">
    <property type="entry name" value="Acetylglutamate kinase-like"/>
    <property type="match status" value="1"/>
</dbReference>
<dbReference type="Gene3D" id="2.30.130.10">
    <property type="entry name" value="PUA domain"/>
    <property type="match status" value="1"/>
</dbReference>
<dbReference type="HAMAP" id="MF_00456">
    <property type="entry name" value="ProB"/>
    <property type="match status" value="1"/>
</dbReference>
<dbReference type="InterPro" id="IPR036393">
    <property type="entry name" value="AceGlu_kinase-like_sf"/>
</dbReference>
<dbReference type="InterPro" id="IPR001048">
    <property type="entry name" value="Asp/Glu/Uridylate_kinase"/>
</dbReference>
<dbReference type="InterPro" id="IPR041739">
    <property type="entry name" value="G5K_ProB"/>
</dbReference>
<dbReference type="InterPro" id="IPR001057">
    <property type="entry name" value="Glu/AcGlu_kinase"/>
</dbReference>
<dbReference type="InterPro" id="IPR011529">
    <property type="entry name" value="Glu_5kinase"/>
</dbReference>
<dbReference type="InterPro" id="IPR005715">
    <property type="entry name" value="Glu_5kinase/COase_Synthase"/>
</dbReference>
<dbReference type="InterPro" id="IPR019797">
    <property type="entry name" value="Glutamate_5-kinase_CS"/>
</dbReference>
<dbReference type="InterPro" id="IPR002478">
    <property type="entry name" value="PUA"/>
</dbReference>
<dbReference type="InterPro" id="IPR015947">
    <property type="entry name" value="PUA-like_sf"/>
</dbReference>
<dbReference type="InterPro" id="IPR036974">
    <property type="entry name" value="PUA_sf"/>
</dbReference>
<dbReference type="NCBIfam" id="TIGR01027">
    <property type="entry name" value="proB"/>
    <property type="match status" value="1"/>
</dbReference>
<dbReference type="PANTHER" id="PTHR43654">
    <property type="entry name" value="GLUTAMATE 5-KINASE"/>
    <property type="match status" value="1"/>
</dbReference>
<dbReference type="PANTHER" id="PTHR43654:SF1">
    <property type="entry name" value="ISOPENTENYL PHOSPHATE KINASE"/>
    <property type="match status" value="1"/>
</dbReference>
<dbReference type="Pfam" id="PF00696">
    <property type="entry name" value="AA_kinase"/>
    <property type="match status" value="1"/>
</dbReference>
<dbReference type="Pfam" id="PF01472">
    <property type="entry name" value="PUA"/>
    <property type="match status" value="1"/>
</dbReference>
<dbReference type="PIRSF" id="PIRSF000729">
    <property type="entry name" value="GK"/>
    <property type="match status" value="1"/>
</dbReference>
<dbReference type="PRINTS" id="PR00474">
    <property type="entry name" value="GLU5KINASE"/>
</dbReference>
<dbReference type="SMART" id="SM00359">
    <property type="entry name" value="PUA"/>
    <property type="match status" value="1"/>
</dbReference>
<dbReference type="SUPFAM" id="SSF53633">
    <property type="entry name" value="Carbamate kinase-like"/>
    <property type="match status" value="1"/>
</dbReference>
<dbReference type="SUPFAM" id="SSF88697">
    <property type="entry name" value="PUA domain-like"/>
    <property type="match status" value="1"/>
</dbReference>
<dbReference type="PROSITE" id="PS00902">
    <property type="entry name" value="GLUTAMATE_5_KINASE"/>
    <property type="match status" value="1"/>
</dbReference>
<dbReference type="PROSITE" id="PS50890">
    <property type="entry name" value="PUA"/>
    <property type="match status" value="1"/>
</dbReference>
<proteinExistence type="inferred from homology"/>
<accession>Q12FA0</accession>